<gene>
    <name type="ordered locus">CV_2047</name>
</gene>
<dbReference type="EMBL" id="AE016825">
    <property type="protein sequence ID" value="AAQ59719.1"/>
    <property type="molecule type" value="Genomic_DNA"/>
</dbReference>
<dbReference type="RefSeq" id="WP_011135595.1">
    <property type="nucleotide sequence ID" value="NC_005085.1"/>
</dbReference>
<dbReference type="SMR" id="Q7NWE3"/>
<dbReference type="STRING" id="243365.CV_2047"/>
<dbReference type="KEGG" id="cvi:CV_2047"/>
<dbReference type="eggNOG" id="COG1666">
    <property type="taxonomic scope" value="Bacteria"/>
</dbReference>
<dbReference type="HOGENOM" id="CLU_099839_1_0_4"/>
<dbReference type="OrthoDB" id="9801447at2"/>
<dbReference type="Proteomes" id="UP000001424">
    <property type="component" value="Chromosome"/>
</dbReference>
<dbReference type="GO" id="GO:0005829">
    <property type="term" value="C:cytosol"/>
    <property type="evidence" value="ECO:0007669"/>
    <property type="project" value="TreeGrafter"/>
</dbReference>
<dbReference type="GO" id="GO:0000166">
    <property type="term" value="F:nucleotide binding"/>
    <property type="evidence" value="ECO:0007669"/>
    <property type="project" value="TreeGrafter"/>
</dbReference>
<dbReference type="CDD" id="cd11740">
    <property type="entry name" value="YajQ_like"/>
    <property type="match status" value="1"/>
</dbReference>
<dbReference type="Gene3D" id="3.30.70.860">
    <property type="match status" value="1"/>
</dbReference>
<dbReference type="Gene3D" id="3.30.70.990">
    <property type="entry name" value="YajQ-like, domain 2"/>
    <property type="match status" value="1"/>
</dbReference>
<dbReference type="HAMAP" id="MF_00632">
    <property type="entry name" value="YajQ"/>
    <property type="match status" value="1"/>
</dbReference>
<dbReference type="InterPro" id="IPR007551">
    <property type="entry name" value="DUF520"/>
</dbReference>
<dbReference type="InterPro" id="IPR035571">
    <property type="entry name" value="UPF0234-like_C"/>
</dbReference>
<dbReference type="InterPro" id="IPR035570">
    <property type="entry name" value="UPF0234_N"/>
</dbReference>
<dbReference type="InterPro" id="IPR036183">
    <property type="entry name" value="YajQ-like_sf"/>
</dbReference>
<dbReference type="NCBIfam" id="NF003819">
    <property type="entry name" value="PRK05412.1"/>
    <property type="match status" value="1"/>
</dbReference>
<dbReference type="PANTHER" id="PTHR30476">
    <property type="entry name" value="UPF0234 PROTEIN YAJQ"/>
    <property type="match status" value="1"/>
</dbReference>
<dbReference type="PANTHER" id="PTHR30476:SF0">
    <property type="entry name" value="UPF0234 PROTEIN YAJQ"/>
    <property type="match status" value="1"/>
</dbReference>
<dbReference type="Pfam" id="PF04461">
    <property type="entry name" value="DUF520"/>
    <property type="match status" value="1"/>
</dbReference>
<dbReference type="SUPFAM" id="SSF89963">
    <property type="entry name" value="YajQ-like"/>
    <property type="match status" value="2"/>
</dbReference>
<comment type="function">
    <text evidence="1">Nucleotide-binding protein.</text>
</comment>
<comment type="similarity">
    <text evidence="1">Belongs to the YajQ family.</text>
</comment>
<proteinExistence type="inferred from homology"/>
<protein>
    <recommendedName>
        <fullName evidence="1">Nucleotide-binding protein CV_2047</fullName>
    </recommendedName>
</protein>
<accession>Q7NWE3</accession>
<reference key="1">
    <citation type="journal article" date="2003" name="Proc. Natl. Acad. Sci. U.S.A.">
        <title>The complete genome sequence of Chromobacterium violaceum reveals remarkable and exploitable bacterial adaptability.</title>
        <authorList>
            <person name="Vasconcelos A.T.R."/>
            <person name="de Almeida D.F."/>
            <person name="Hungria M."/>
            <person name="Guimaraes C.T."/>
            <person name="Antonio R.V."/>
            <person name="Almeida F.C."/>
            <person name="de Almeida L.G.P."/>
            <person name="de Almeida R."/>
            <person name="Alves-Gomes J.A."/>
            <person name="Andrade E.M."/>
            <person name="Araripe J."/>
            <person name="de Araujo M.F.F."/>
            <person name="Astolfi-Filho S."/>
            <person name="Azevedo V."/>
            <person name="Baptista A.J."/>
            <person name="Bataus L.A.M."/>
            <person name="Batista J.S."/>
            <person name="Belo A."/>
            <person name="van den Berg C."/>
            <person name="Bogo M."/>
            <person name="Bonatto S."/>
            <person name="Bordignon J."/>
            <person name="Brigido M.M."/>
            <person name="Brito C.A."/>
            <person name="Brocchi M."/>
            <person name="Burity H.A."/>
            <person name="Camargo A.A."/>
            <person name="Cardoso D.D.P."/>
            <person name="Carneiro N.P."/>
            <person name="Carraro D.M."/>
            <person name="Carvalho C.M.B."/>
            <person name="Cascardo J.C.M."/>
            <person name="Cavada B.S."/>
            <person name="Chueire L.M.O."/>
            <person name="Creczynski-Pasa T.B."/>
            <person name="Cunha-Junior N.C."/>
            <person name="Fagundes N."/>
            <person name="Falcao C.L."/>
            <person name="Fantinatti F."/>
            <person name="Farias I.P."/>
            <person name="Felipe M.S.S."/>
            <person name="Ferrari L.P."/>
            <person name="Ferro J.A."/>
            <person name="Ferro M.I.T."/>
            <person name="Franco G.R."/>
            <person name="Freitas N.S.A."/>
            <person name="Furlan L.R."/>
            <person name="Gazzinelli R.T."/>
            <person name="Gomes E.A."/>
            <person name="Goncalves P.R."/>
            <person name="Grangeiro T.B."/>
            <person name="Grattapaglia D."/>
            <person name="Grisard E.C."/>
            <person name="Hanna E.S."/>
            <person name="Jardim S.N."/>
            <person name="Laurino J."/>
            <person name="Leoi L.C.T."/>
            <person name="Lima L.F.A."/>
            <person name="Loureiro M.F."/>
            <person name="Lyra M.C.C.P."/>
            <person name="Madeira H.M.F."/>
            <person name="Manfio G.P."/>
            <person name="Maranhao A.Q."/>
            <person name="Martins W.S."/>
            <person name="di Mauro S.M.Z."/>
            <person name="de Medeiros S.R.B."/>
            <person name="Meissner R.V."/>
            <person name="Moreira M.A.M."/>
            <person name="Nascimento F.F."/>
            <person name="Nicolas M.F."/>
            <person name="Oliveira J.G."/>
            <person name="Oliveira S.C."/>
            <person name="Paixao R.F.C."/>
            <person name="Parente J.A."/>
            <person name="Pedrosa F.O."/>
            <person name="Pena S.D.J."/>
            <person name="Pereira J.O."/>
            <person name="Pereira M."/>
            <person name="Pinto L.S.R.C."/>
            <person name="Pinto L.S."/>
            <person name="Porto J.I.R."/>
            <person name="Potrich D.P."/>
            <person name="Ramalho-Neto C.E."/>
            <person name="Reis A.M.M."/>
            <person name="Rigo L.U."/>
            <person name="Rondinelli E."/>
            <person name="Santos E.B.P."/>
            <person name="Santos F.R."/>
            <person name="Schneider M.P.C."/>
            <person name="Seuanez H.N."/>
            <person name="Silva A.M.R."/>
            <person name="da Silva A.L.C."/>
            <person name="Silva D.W."/>
            <person name="Silva R."/>
            <person name="Simoes I.C."/>
            <person name="Simon D."/>
            <person name="Soares C.M.A."/>
            <person name="Soares R.B.A."/>
            <person name="Souza E.M."/>
            <person name="Souza K.R.L."/>
            <person name="Souza R.C."/>
            <person name="Steffens M.B.R."/>
            <person name="Steindel M."/>
            <person name="Teixeira S.R."/>
            <person name="Urmenyi T."/>
            <person name="Vettore A."/>
            <person name="Wassem R."/>
            <person name="Zaha A."/>
            <person name="Simpson A.J.G."/>
        </authorList>
    </citation>
    <scope>NUCLEOTIDE SEQUENCE [LARGE SCALE GENOMIC DNA]</scope>
    <source>
        <strain>ATCC 12472 / DSM 30191 / JCM 1249 / CCUG 213 / NBRC 12614 / NCIMB 9131 / NCTC 9757 / MK</strain>
    </source>
</reference>
<keyword id="KW-0547">Nucleotide-binding</keyword>
<keyword id="KW-1185">Reference proteome</keyword>
<evidence type="ECO:0000255" key="1">
    <source>
        <dbReference type="HAMAP-Rule" id="MF_00632"/>
    </source>
</evidence>
<feature type="chain" id="PRO_0000106178" description="Nucleotide-binding protein CV_2047">
    <location>
        <begin position="1"/>
        <end position="166"/>
    </location>
</feature>
<name>Y2047_CHRVO</name>
<organism>
    <name type="scientific">Chromobacterium violaceum (strain ATCC 12472 / DSM 30191 / JCM 1249 / CCUG 213 / NBRC 12614 / NCIMB 9131 / NCTC 9757 / MK)</name>
    <dbReference type="NCBI Taxonomy" id="243365"/>
    <lineage>
        <taxon>Bacteria</taxon>
        <taxon>Pseudomonadati</taxon>
        <taxon>Pseudomonadota</taxon>
        <taxon>Betaproteobacteria</taxon>
        <taxon>Neisseriales</taxon>
        <taxon>Chromobacteriaceae</taxon>
        <taxon>Chromobacterium</taxon>
    </lineage>
</organism>
<sequence length="166" mass="18559">MPSFDVVSEVNKVEVRNALDQANKEVSTRYDFKGSDARIEFNDKEVTLFADTEFQLDQVNDILVNKLSKRSVDVRSLDYGKLEKVSGNKVKKVLKIKEGLDSDLAKKIVKLLKDSKMKVQASIQGEAVRVSGAKRDVLQEAIALLKAEIASDLENGAPLQFNNFRD</sequence>